<sequence>MSFKVKNQSKHLYSLMTKFKRSQLILKHQSNNFASELWNEEDIIRSKQFIELIEDTLLHLKKDTVDFIYDIFIYGKKPCDISYSNSTYYKKLNKAANSFFDHFVWEAPIYKTKELKNDNSHS</sequence>
<name>Y403_MYCPN</name>
<dbReference type="EMBL" id="U00089">
    <property type="protein sequence ID" value="AAB96083.1"/>
    <property type="molecule type" value="Genomic_DNA"/>
</dbReference>
<dbReference type="PIR" id="S73761">
    <property type="entry name" value="S73761"/>
</dbReference>
<dbReference type="RefSeq" id="NP_110091.1">
    <property type="nucleotide sequence ID" value="NC_000912.1"/>
</dbReference>
<dbReference type="RefSeq" id="WP_010874759.1">
    <property type="nucleotide sequence ID" value="NZ_OU342337.1"/>
</dbReference>
<dbReference type="STRING" id="272634.MPN_403"/>
<dbReference type="EnsemblBacteria" id="AAB96083">
    <property type="protein sequence ID" value="AAB96083"/>
    <property type="gene ID" value="MPN_403"/>
</dbReference>
<dbReference type="KEGG" id="mpn:MPN_403"/>
<dbReference type="PATRIC" id="fig|272634.6.peg.436"/>
<dbReference type="HOGENOM" id="CLU_2024168_0_0_14"/>
<dbReference type="OrthoDB" id="9912564at2"/>
<dbReference type="BioCyc" id="MPNE272634:G1GJ3-646-MONOMER"/>
<dbReference type="Proteomes" id="UP000000808">
    <property type="component" value="Chromosome"/>
</dbReference>
<dbReference type="NCBIfam" id="NF045770">
    <property type="entry name" value="MPN403_MG284_C"/>
    <property type="match status" value="1"/>
</dbReference>
<keyword id="KW-1185">Reference proteome</keyword>
<proteinExistence type="predicted"/>
<reference key="1">
    <citation type="journal article" date="1996" name="Nucleic Acids Res.">
        <title>Complete sequence analysis of the genome of the bacterium Mycoplasma pneumoniae.</title>
        <authorList>
            <person name="Himmelreich R."/>
            <person name="Hilbert H."/>
            <person name="Plagens H."/>
            <person name="Pirkl E."/>
            <person name="Li B.-C."/>
            <person name="Herrmann R."/>
        </authorList>
    </citation>
    <scope>NUCLEOTIDE SEQUENCE [LARGE SCALE GENOMIC DNA]</scope>
    <source>
        <strain>ATCC 29342 / M129 / Subtype 1</strain>
    </source>
</reference>
<gene>
    <name type="ordered locus">MPN_403</name>
    <name type="ORF">F11_orf122a</name>
    <name type="ORF">MP435</name>
</gene>
<protein>
    <recommendedName>
        <fullName>Uncharacterized protein MG284 homolog</fullName>
    </recommendedName>
</protein>
<organism>
    <name type="scientific">Mycoplasma pneumoniae (strain ATCC 29342 / M129 / Subtype 1)</name>
    <name type="common">Mycoplasmoides pneumoniae</name>
    <dbReference type="NCBI Taxonomy" id="272634"/>
    <lineage>
        <taxon>Bacteria</taxon>
        <taxon>Bacillati</taxon>
        <taxon>Mycoplasmatota</taxon>
        <taxon>Mycoplasmoidales</taxon>
        <taxon>Mycoplasmoidaceae</taxon>
        <taxon>Mycoplasmoides</taxon>
    </lineage>
</organism>
<feature type="chain" id="PRO_0000210511" description="Uncharacterized protein MG284 homolog">
    <location>
        <begin position="1"/>
        <end position="122"/>
    </location>
</feature>
<accession>P75381</accession>